<proteinExistence type="inferred from homology"/>
<accession>C1C8M1</accession>
<feature type="chain" id="PRO_1000199569" description="Threonine--tRNA ligase">
    <location>
        <begin position="1"/>
        <end position="647"/>
    </location>
</feature>
<feature type="domain" description="TGS" evidence="2">
    <location>
        <begin position="1"/>
        <end position="61"/>
    </location>
</feature>
<feature type="region of interest" description="Catalytic" evidence="1">
    <location>
        <begin position="242"/>
        <end position="540"/>
    </location>
</feature>
<feature type="binding site" evidence="1">
    <location>
        <position position="336"/>
    </location>
    <ligand>
        <name>Zn(2+)</name>
        <dbReference type="ChEBI" id="CHEBI:29105"/>
    </ligand>
</feature>
<feature type="binding site" evidence="1">
    <location>
        <position position="387"/>
    </location>
    <ligand>
        <name>Zn(2+)</name>
        <dbReference type="ChEBI" id="CHEBI:29105"/>
    </ligand>
</feature>
<feature type="binding site" evidence="1">
    <location>
        <position position="517"/>
    </location>
    <ligand>
        <name>Zn(2+)</name>
        <dbReference type="ChEBI" id="CHEBI:29105"/>
    </ligand>
</feature>
<protein>
    <recommendedName>
        <fullName evidence="1">Threonine--tRNA ligase</fullName>
        <ecNumber evidence="1">6.1.1.3</ecNumber>
    </recommendedName>
    <alternativeName>
        <fullName evidence="1">Threonyl-tRNA synthetase</fullName>
        <shortName evidence="1">ThrRS</shortName>
    </alternativeName>
</protein>
<comment type="function">
    <text evidence="1">Catalyzes the attachment of threonine to tRNA(Thr) in a two-step reaction: L-threonine is first activated by ATP to form Thr-AMP and then transferred to the acceptor end of tRNA(Thr). Also edits incorrectly charged L-seryl-tRNA(Thr).</text>
</comment>
<comment type="catalytic activity">
    <reaction evidence="1">
        <text>tRNA(Thr) + L-threonine + ATP = L-threonyl-tRNA(Thr) + AMP + diphosphate + H(+)</text>
        <dbReference type="Rhea" id="RHEA:24624"/>
        <dbReference type="Rhea" id="RHEA-COMP:9670"/>
        <dbReference type="Rhea" id="RHEA-COMP:9704"/>
        <dbReference type="ChEBI" id="CHEBI:15378"/>
        <dbReference type="ChEBI" id="CHEBI:30616"/>
        <dbReference type="ChEBI" id="CHEBI:33019"/>
        <dbReference type="ChEBI" id="CHEBI:57926"/>
        <dbReference type="ChEBI" id="CHEBI:78442"/>
        <dbReference type="ChEBI" id="CHEBI:78534"/>
        <dbReference type="ChEBI" id="CHEBI:456215"/>
        <dbReference type="EC" id="6.1.1.3"/>
    </reaction>
</comment>
<comment type="cofactor">
    <cofactor evidence="1">
        <name>Zn(2+)</name>
        <dbReference type="ChEBI" id="CHEBI:29105"/>
    </cofactor>
    <text evidence="1">Binds 1 zinc ion per subunit.</text>
</comment>
<comment type="subunit">
    <text evidence="1">Homodimer.</text>
</comment>
<comment type="subcellular location">
    <subcellularLocation>
        <location evidence="1">Cytoplasm</location>
    </subcellularLocation>
</comment>
<comment type="similarity">
    <text evidence="1">Belongs to the class-II aminoacyl-tRNA synthetase family.</text>
</comment>
<dbReference type="EC" id="6.1.1.3" evidence="1"/>
<dbReference type="EMBL" id="CP000918">
    <property type="protein sequence ID" value="ACO15928.1"/>
    <property type="molecule type" value="Genomic_DNA"/>
</dbReference>
<dbReference type="RefSeq" id="WP_000608349.1">
    <property type="nucleotide sequence ID" value="NC_012468.1"/>
</dbReference>
<dbReference type="SMR" id="C1C8M1"/>
<dbReference type="GeneID" id="45653153"/>
<dbReference type="KEGG" id="snm:SP70585_1672"/>
<dbReference type="HOGENOM" id="CLU_008554_3_2_9"/>
<dbReference type="Proteomes" id="UP000002211">
    <property type="component" value="Chromosome"/>
</dbReference>
<dbReference type="GO" id="GO:0005737">
    <property type="term" value="C:cytoplasm"/>
    <property type="evidence" value="ECO:0007669"/>
    <property type="project" value="UniProtKB-SubCell"/>
</dbReference>
<dbReference type="GO" id="GO:0005524">
    <property type="term" value="F:ATP binding"/>
    <property type="evidence" value="ECO:0007669"/>
    <property type="project" value="UniProtKB-UniRule"/>
</dbReference>
<dbReference type="GO" id="GO:0140096">
    <property type="term" value="F:catalytic activity, acting on a protein"/>
    <property type="evidence" value="ECO:0007669"/>
    <property type="project" value="UniProtKB-ARBA"/>
</dbReference>
<dbReference type="GO" id="GO:0046872">
    <property type="term" value="F:metal ion binding"/>
    <property type="evidence" value="ECO:0007669"/>
    <property type="project" value="UniProtKB-KW"/>
</dbReference>
<dbReference type="GO" id="GO:0004829">
    <property type="term" value="F:threonine-tRNA ligase activity"/>
    <property type="evidence" value="ECO:0007669"/>
    <property type="project" value="UniProtKB-UniRule"/>
</dbReference>
<dbReference type="GO" id="GO:0016740">
    <property type="term" value="F:transferase activity"/>
    <property type="evidence" value="ECO:0007669"/>
    <property type="project" value="UniProtKB-ARBA"/>
</dbReference>
<dbReference type="GO" id="GO:0000049">
    <property type="term" value="F:tRNA binding"/>
    <property type="evidence" value="ECO:0007669"/>
    <property type="project" value="UniProtKB-KW"/>
</dbReference>
<dbReference type="GO" id="GO:0006435">
    <property type="term" value="P:threonyl-tRNA aminoacylation"/>
    <property type="evidence" value="ECO:0007669"/>
    <property type="project" value="UniProtKB-UniRule"/>
</dbReference>
<dbReference type="CDD" id="cd01667">
    <property type="entry name" value="TGS_ThrRS"/>
    <property type="match status" value="1"/>
</dbReference>
<dbReference type="CDD" id="cd00860">
    <property type="entry name" value="ThrRS_anticodon"/>
    <property type="match status" value="1"/>
</dbReference>
<dbReference type="CDD" id="cd00771">
    <property type="entry name" value="ThrRS_core"/>
    <property type="match status" value="1"/>
</dbReference>
<dbReference type="FunFam" id="3.10.20.30:FF:000005">
    <property type="entry name" value="Threonine--tRNA ligase"/>
    <property type="match status" value="1"/>
</dbReference>
<dbReference type="FunFam" id="3.30.54.20:FF:000002">
    <property type="entry name" value="Threonine--tRNA ligase"/>
    <property type="match status" value="1"/>
</dbReference>
<dbReference type="FunFam" id="3.30.930.10:FF:000002">
    <property type="entry name" value="Threonine--tRNA ligase"/>
    <property type="match status" value="1"/>
</dbReference>
<dbReference type="FunFam" id="3.40.50.800:FF:000001">
    <property type="entry name" value="Threonine--tRNA ligase"/>
    <property type="match status" value="1"/>
</dbReference>
<dbReference type="FunFam" id="3.30.980.10:FF:000005">
    <property type="entry name" value="Threonyl-tRNA synthetase, mitochondrial"/>
    <property type="match status" value="1"/>
</dbReference>
<dbReference type="Gene3D" id="3.10.20.30">
    <property type="match status" value="1"/>
</dbReference>
<dbReference type="Gene3D" id="3.30.54.20">
    <property type="match status" value="1"/>
</dbReference>
<dbReference type="Gene3D" id="3.40.50.800">
    <property type="entry name" value="Anticodon-binding domain"/>
    <property type="match status" value="1"/>
</dbReference>
<dbReference type="Gene3D" id="3.30.930.10">
    <property type="entry name" value="Bira Bifunctional Protein, Domain 2"/>
    <property type="match status" value="1"/>
</dbReference>
<dbReference type="Gene3D" id="3.30.980.10">
    <property type="entry name" value="Threonyl-trna Synthetase, Chain A, domain 2"/>
    <property type="match status" value="1"/>
</dbReference>
<dbReference type="HAMAP" id="MF_00184">
    <property type="entry name" value="Thr_tRNA_synth"/>
    <property type="match status" value="1"/>
</dbReference>
<dbReference type="InterPro" id="IPR002314">
    <property type="entry name" value="aa-tRNA-synt_IIb"/>
</dbReference>
<dbReference type="InterPro" id="IPR006195">
    <property type="entry name" value="aa-tRNA-synth_II"/>
</dbReference>
<dbReference type="InterPro" id="IPR045864">
    <property type="entry name" value="aa-tRNA-synth_II/BPL/LPL"/>
</dbReference>
<dbReference type="InterPro" id="IPR004154">
    <property type="entry name" value="Anticodon-bd"/>
</dbReference>
<dbReference type="InterPro" id="IPR036621">
    <property type="entry name" value="Anticodon-bd_dom_sf"/>
</dbReference>
<dbReference type="InterPro" id="IPR012675">
    <property type="entry name" value="Beta-grasp_dom_sf"/>
</dbReference>
<dbReference type="InterPro" id="IPR004095">
    <property type="entry name" value="TGS"/>
</dbReference>
<dbReference type="InterPro" id="IPR012676">
    <property type="entry name" value="TGS-like"/>
</dbReference>
<dbReference type="InterPro" id="IPR002320">
    <property type="entry name" value="Thr-tRNA-ligase_IIa"/>
</dbReference>
<dbReference type="InterPro" id="IPR018163">
    <property type="entry name" value="Thr/Ala-tRNA-synth_IIc_edit"/>
</dbReference>
<dbReference type="InterPro" id="IPR047246">
    <property type="entry name" value="ThrRS_anticodon"/>
</dbReference>
<dbReference type="InterPro" id="IPR033728">
    <property type="entry name" value="ThrRS_core"/>
</dbReference>
<dbReference type="InterPro" id="IPR012947">
    <property type="entry name" value="tRNA_SAD"/>
</dbReference>
<dbReference type="NCBIfam" id="TIGR00418">
    <property type="entry name" value="thrS"/>
    <property type="match status" value="1"/>
</dbReference>
<dbReference type="PANTHER" id="PTHR11451:SF56">
    <property type="entry name" value="THREONINE--TRNA LIGASE 1"/>
    <property type="match status" value="1"/>
</dbReference>
<dbReference type="PANTHER" id="PTHR11451">
    <property type="entry name" value="THREONINE-TRNA LIGASE"/>
    <property type="match status" value="1"/>
</dbReference>
<dbReference type="Pfam" id="PF03129">
    <property type="entry name" value="HGTP_anticodon"/>
    <property type="match status" value="1"/>
</dbReference>
<dbReference type="Pfam" id="PF02824">
    <property type="entry name" value="TGS"/>
    <property type="match status" value="1"/>
</dbReference>
<dbReference type="Pfam" id="PF00587">
    <property type="entry name" value="tRNA-synt_2b"/>
    <property type="match status" value="1"/>
</dbReference>
<dbReference type="Pfam" id="PF07973">
    <property type="entry name" value="tRNA_SAD"/>
    <property type="match status" value="1"/>
</dbReference>
<dbReference type="PRINTS" id="PR01047">
    <property type="entry name" value="TRNASYNTHTHR"/>
</dbReference>
<dbReference type="SMART" id="SM00863">
    <property type="entry name" value="tRNA_SAD"/>
    <property type="match status" value="1"/>
</dbReference>
<dbReference type="SUPFAM" id="SSF52954">
    <property type="entry name" value="Class II aaRS ABD-related"/>
    <property type="match status" value="1"/>
</dbReference>
<dbReference type="SUPFAM" id="SSF55681">
    <property type="entry name" value="Class II aaRS and biotin synthetases"/>
    <property type="match status" value="1"/>
</dbReference>
<dbReference type="SUPFAM" id="SSF81271">
    <property type="entry name" value="TGS-like"/>
    <property type="match status" value="1"/>
</dbReference>
<dbReference type="SUPFAM" id="SSF55186">
    <property type="entry name" value="ThrRS/AlaRS common domain"/>
    <property type="match status" value="1"/>
</dbReference>
<dbReference type="PROSITE" id="PS50862">
    <property type="entry name" value="AA_TRNA_LIGASE_II"/>
    <property type="match status" value="1"/>
</dbReference>
<dbReference type="PROSITE" id="PS51880">
    <property type="entry name" value="TGS"/>
    <property type="match status" value="1"/>
</dbReference>
<organism>
    <name type="scientific">Streptococcus pneumoniae (strain 70585)</name>
    <dbReference type="NCBI Taxonomy" id="488221"/>
    <lineage>
        <taxon>Bacteria</taxon>
        <taxon>Bacillati</taxon>
        <taxon>Bacillota</taxon>
        <taxon>Bacilli</taxon>
        <taxon>Lactobacillales</taxon>
        <taxon>Streptococcaceae</taxon>
        <taxon>Streptococcus</taxon>
    </lineage>
</organism>
<name>SYT_STRP7</name>
<keyword id="KW-0030">Aminoacyl-tRNA synthetase</keyword>
<keyword id="KW-0067">ATP-binding</keyword>
<keyword id="KW-0963">Cytoplasm</keyword>
<keyword id="KW-0436">Ligase</keyword>
<keyword id="KW-0479">Metal-binding</keyword>
<keyword id="KW-0547">Nucleotide-binding</keyword>
<keyword id="KW-0648">Protein biosynthesis</keyword>
<keyword id="KW-0694">RNA-binding</keyword>
<keyword id="KW-0820">tRNA-binding</keyword>
<keyword id="KW-0862">Zinc</keyword>
<reference key="1">
    <citation type="journal article" date="2010" name="Genome Biol.">
        <title>Structure and dynamics of the pan-genome of Streptococcus pneumoniae and closely related species.</title>
        <authorList>
            <person name="Donati C."/>
            <person name="Hiller N.L."/>
            <person name="Tettelin H."/>
            <person name="Muzzi A."/>
            <person name="Croucher N.J."/>
            <person name="Angiuoli S.V."/>
            <person name="Oggioni M."/>
            <person name="Dunning Hotopp J.C."/>
            <person name="Hu F.Z."/>
            <person name="Riley D.R."/>
            <person name="Covacci A."/>
            <person name="Mitchell T.J."/>
            <person name="Bentley S.D."/>
            <person name="Kilian M."/>
            <person name="Ehrlich G.D."/>
            <person name="Rappuoli R."/>
            <person name="Moxon E.R."/>
            <person name="Masignani V."/>
        </authorList>
    </citation>
    <scope>NUCLEOTIDE SEQUENCE [LARGE SCALE GENOMIC DNA]</scope>
    <source>
        <strain>70585</strain>
    </source>
</reference>
<sequence>MINITFPDGAVREFESGVTTFEIAQSISNSLAKKALAGKFNGKLIDTTRAITEDGSIEIVTPDHEDALPILRHSAAHLFAQAARRLFPDIHLGVGPAIEDGFYYDTDNTAGQISNEDLPRIEEEMQKIVKENFPSIREEVTKDEAREIFKNDPYKLELIEEHSEDEGGLTIYRQGEYVDLCRGPHVPSTGRIQIFHLLHVAGAYWRGNSDNAMMQRIYGTAWFDKKDLKNYLQMREEAKERDHRKLGKELDLFMISQEVGQGLPFWLPNGATIRRELERYIVNKELASGYQHVYTPPLASVELYKTSGHWDHYQEDMFPTMDMGDGEEFVLRPMNCPHHIQVFKHHVHSYRELPIRIAEIGMMHRYEKSGALTGLQRVREMSLNDGHLFVTPEQIQEEFQRALQLIIDVYEDFNLTDYRFRLSLRDPQDTHKYFDNDEMWENAQTMLRAALDEMGVDYFEAEGEAAFYGPKLDIQIKTALGKEETLSTIQLDFLLPERFDLKYIGADGEDHRPVMIHRGVISTMERFTAILIENYKGAFPTWLAPHQVTLIPVSNEKHVDYAWEVAKKLRDRGVRADVDERNEKMQFKIRASQTSKIPYQLIVGDKEMEDETVNVRRYGQKETQTVSVDNFVQAILADIANKSRVEK</sequence>
<evidence type="ECO:0000255" key="1">
    <source>
        <dbReference type="HAMAP-Rule" id="MF_00184"/>
    </source>
</evidence>
<evidence type="ECO:0000255" key="2">
    <source>
        <dbReference type="PROSITE-ProRule" id="PRU01228"/>
    </source>
</evidence>
<gene>
    <name evidence="1" type="primary">thrS</name>
    <name type="ordered locus">SP70585_1672</name>
</gene>